<organism>
    <name type="scientific">Rhodella violacea</name>
    <name type="common">Red alga</name>
    <dbReference type="NCBI Taxonomy" id="2801"/>
    <lineage>
        <taxon>Eukaryota</taxon>
        <taxon>Rhodophyta</taxon>
        <taxon>Rhodellophyceae</taxon>
        <taxon>Rhodellales</taxon>
        <taxon>Rhodellaceae</taxon>
        <taxon>Rhodella</taxon>
    </lineage>
</organism>
<comment type="function">
    <text>Catalyzes the opening of the heme ring with the release of iron. Key enzyme in the synthesis of the chromophoric part of the photosynthetic antennae.</text>
</comment>
<comment type="catalytic activity">
    <reaction evidence="2">
        <text>heme b + 3 reduced [NADPH--hemoprotein reductase] + 3 O2 = biliverdin IXalpha + CO + Fe(2+) + 3 oxidized [NADPH--hemoprotein reductase] + 3 H2O + H(+)</text>
        <dbReference type="Rhea" id="RHEA:21764"/>
        <dbReference type="Rhea" id="RHEA-COMP:11964"/>
        <dbReference type="Rhea" id="RHEA-COMP:11965"/>
        <dbReference type="ChEBI" id="CHEBI:15377"/>
        <dbReference type="ChEBI" id="CHEBI:15378"/>
        <dbReference type="ChEBI" id="CHEBI:15379"/>
        <dbReference type="ChEBI" id="CHEBI:17245"/>
        <dbReference type="ChEBI" id="CHEBI:29033"/>
        <dbReference type="ChEBI" id="CHEBI:57618"/>
        <dbReference type="ChEBI" id="CHEBI:57991"/>
        <dbReference type="ChEBI" id="CHEBI:58210"/>
        <dbReference type="ChEBI" id="CHEBI:60344"/>
        <dbReference type="EC" id="1.14.14.18"/>
    </reaction>
</comment>
<comment type="subcellular location">
    <subcellularLocation>
        <location>Plastid</location>
        <location>Chloroplast</location>
    </subcellularLocation>
</comment>
<comment type="similarity">
    <text evidence="3">Belongs to the heme oxygenase family.</text>
</comment>
<dbReference type="EC" id="1.14.14.18" evidence="2"/>
<dbReference type="EMBL" id="AF000719">
    <property type="protein sequence ID" value="AAB66516.1"/>
    <property type="molecule type" value="Genomic_DNA"/>
</dbReference>
<dbReference type="EMBL" id="AF000717">
    <property type="protein sequence ID" value="AAB66516.1"/>
    <property type="status" value="JOINED"/>
    <property type="molecule type" value="Genomic_DNA"/>
</dbReference>
<dbReference type="EMBL" id="AF000718">
    <property type="protein sequence ID" value="AAB66516.1"/>
    <property type="status" value="JOINED"/>
    <property type="molecule type" value="Genomic_DNA"/>
</dbReference>
<dbReference type="SMR" id="O19998"/>
<dbReference type="GO" id="GO:0009507">
    <property type="term" value="C:chloroplast"/>
    <property type="evidence" value="ECO:0007669"/>
    <property type="project" value="UniProtKB-SubCell"/>
</dbReference>
<dbReference type="GO" id="GO:0020037">
    <property type="term" value="F:heme binding"/>
    <property type="evidence" value="ECO:0007669"/>
    <property type="project" value="TreeGrafter"/>
</dbReference>
<dbReference type="GO" id="GO:0004392">
    <property type="term" value="F:heme oxygenase (decyclizing) activity"/>
    <property type="evidence" value="ECO:0007669"/>
    <property type="project" value="UniProtKB-EC"/>
</dbReference>
<dbReference type="GO" id="GO:0046872">
    <property type="term" value="F:metal ion binding"/>
    <property type="evidence" value="ECO:0007669"/>
    <property type="project" value="UniProtKB-KW"/>
</dbReference>
<dbReference type="GO" id="GO:0042167">
    <property type="term" value="P:heme catabolic process"/>
    <property type="evidence" value="ECO:0007669"/>
    <property type="project" value="TreeGrafter"/>
</dbReference>
<dbReference type="GO" id="GO:0006788">
    <property type="term" value="P:heme oxidation"/>
    <property type="evidence" value="ECO:0007669"/>
    <property type="project" value="InterPro"/>
</dbReference>
<dbReference type="GO" id="GO:0015979">
    <property type="term" value="P:photosynthesis"/>
    <property type="evidence" value="ECO:0007669"/>
    <property type="project" value="UniProtKB-KW"/>
</dbReference>
<dbReference type="GO" id="GO:0006979">
    <property type="term" value="P:response to oxidative stress"/>
    <property type="evidence" value="ECO:0007669"/>
    <property type="project" value="TreeGrafter"/>
</dbReference>
<dbReference type="CDD" id="cd19165">
    <property type="entry name" value="HemeO"/>
    <property type="match status" value="1"/>
</dbReference>
<dbReference type="FunFam" id="1.20.910.10:FF:000001">
    <property type="entry name" value="Heme oxygenase 1"/>
    <property type="match status" value="1"/>
</dbReference>
<dbReference type="Gene3D" id="1.20.910.10">
    <property type="entry name" value="Heme oxygenase-like"/>
    <property type="match status" value="1"/>
</dbReference>
<dbReference type="InterPro" id="IPR002051">
    <property type="entry name" value="Haem_Oase"/>
</dbReference>
<dbReference type="InterPro" id="IPR016053">
    <property type="entry name" value="Haem_Oase-like"/>
</dbReference>
<dbReference type="InterPro" id="IPR016084">
    <property type="entry name" value="Haem_Oase-like_multi-hlx"/>
</dbReference>
<dbReference type="InterPro" id="IPR018207">
    <property type="entry name" value="Haem_oxygenase_CS"/>
</dbReference>
<dbReference type="PANTHER" id="PTHR10720">
    <property type="entry name" value="HEME OXYGENASE"/>
    <property type="match status" value="1"/>
</dbReference>
<dbReference type="PANTHER" id="PTHR10720:SF0">
    <property type="entry name" value="HEME OXYGENASE"/>
    <property type="match status" value="1"/>
</dbReference>
<dbReference type="Pfam" id="PF01126">
    <property type="entry name" value="Heme_oxygenase"/>
    <property type="match status" value="1"/>
</dbReference>
<dbReference type="PIRSF" id="PIRSF000343">
    <property type="entry name" value="Haem_Oase"/>
    <property type="match status" value="1"/>
</dbReference>
<dbReference type="PRINTS" id="PR00088">
    <property type="entry name" value="HAEMOXYGNASE"/>
</dbReference>
<dbReference type="SUPFAM" id="SSF48613">
    <property type="entry name" value="Heme oxygenase-like"/>
    <property type="match status" value="1"/>
</dbReference>
<dbReference type="PROSITE" id="PS00593">
    <property type="entry name" value="HEME_OXYGENASE"/>
    <property type="match status" value="1"/>
</dbReference>
<gene>
    <name type="primary">pbsA</name>
</gene>
<geneLocation type="chloroplast"/>
<proteinExistence type="inferred from homology"/>
<sequence>MIYDTNLALQLRQGTTKAHSMAENVSFVKSFLGGVVDKQAYRQLIANFYFVYSAIEDEMKRHQESQIIKPIYFEELNRKSSLEEDLQFYYGLEWQDKIFPSPATKVYINRIHEISNTSPELLIAHCYTRYLGDLSGGQILKKITQSAMNLSGGEGTAFYEFKDIKDEKNFKQNYRLALDSIHLSDSAIKSIVSEANIAFKLNMKIFQELNSNFIKIIAIFLFNFIKRIKLPGFKS</sequence>
<feature type="chain" id="PRO_0000209700" description="Heme oxygenase">
    <location>
        <begin position="1"/>
        <end position="235"/>
    </location>
</feature>
<feature type="binding site" description="axial binding residue" evidence="1">
    <location>
        <position position="19"/>
    </location>
    <ligand>
        <name>heme b</name>
        <dbReference type="ChEBI" id="CHEBI:60344"/>
    </ligand>
    <ligandPart>
        <name>Fe</name>
        <dbReference type="ChEBI" id="CHEBI:18248"/>
    </ligandPart>
</feature>
<accession>O19998</accession>
<keyword id="KW-0150">Chloroplast</keyword>
<keyword id="KW-0349">Heme</keyword>
<keyword id="KW-0408">Iron</keyword>
<keyword id="KW-0479">Metal-binding</keyword>
<keyword id="KW-0560">Oxidoreductase</keyword>
<keyword id="KW-0602">Photosynthesis</keyword>
<keyword id="KW-0934">Plastid</keyword>
<protein>
    <recommendedName>
        <fullName>Heme oxygenase</fullName>
        <ecNumber evidence="2">1.14.14.18</ecNumber>
    </recommendedName>
</protein>
<name>HO_RHOVL</name>
<reference key="1">
    <citation type="journal article" date="1997" name="Proc. Natl. Acad. Sci. U.S.A.">
        <title>The heme oxygenase gene (pbsA) in the red alga Rhodella violacea is discontinuous and transcriptionally activated during iron limitation.</title>
        <authorList>
            <person name="Richaud C."/>
            <person name="Zabulon G."/>
        </authorList>
    </citation>
    <scope>NUCLEOTIDE SEQUENCE [GENOMIC DNA]</scope>
</reference>
<evidence type="ECO:0000250" key="1"/>
<evidence type="ECO:0000250" key="2">
    <source>
        <dbReference type="UniProtKB" id="O48782"/>
    </source>
</evidence>
<evidence type="ECO:0000305" key="3"/>